<dbReference type="EC" id="2.7.7.77" evidence="1"/>
<dbReference type="EMBL" id="AE000516">
    <property type="protein sequence ID" value="AAK46828.1"/>
    <property type="molecule type" value="Genomic_DNA"/>
</dbReference>
<dbReference type="PIR" id="D70864">
    <property type="entry name" value="D70864"/>
</dbReference>
<dbReference type="RefSeq" id="WP_003412618.1">
    <property type="nucleotide sequence ID" value="NZ_KK341227.1"/>
</dbReference>
<dbReference type="SMR" id="P9WJQ8"/>
<dbReference type="GeneID" id="45426443"/>
<dbReference type="KEGG" id="mtc:MT2528"/>
<dbReference type="PATRIC" id="fig|83331.31.peg.2728"/>
<dbReference type="HOGENOM" id="CLU_055597_3_2_11"/>
<dbReference type="Proteomes" id="UP000001020">
    <property type="component" value="Chromosome"/>
</dbReference>
<dbReference type="GO" id="GO:0005737">
    <property type="term" value="C:cytoplasm"/>
    <property type="evidence" value="ECO:0007669"/>
    <property type="project" value="UniProtKB-SubCell"/>
</dbReference>
<dbReference type="GO" id="GO:0005525">
    <property type="term" value="F:GTP binding"/>
    <property type="evidence" value="ECO:0007669"/>
    <property type="project" value="UniProtKB-UniRule"/>
</dbReference>
<dbReference type="GO" id="GO:0046872">
    <property type="term" value="F:metal ion binding"/>
    <property type="evidence" value="ECO:0007669"/>
    <property type="project" value="UniProtKB-KW"/>
</dbReference>
<dbReference type="GO" id="GO:0061603">
    <property type="term" value="F:molybdenum cofactor guanylyltransferase activity"/>
    <property type="evidence" value="ECO:0007669"/>
    <property type="project" value="UniProtKB-EC"/>
</dbReference>
<dbReference type="GO" id="GO:0006777">
    <property type="term" value="P:Mo-molybdopterin cofactor biosynthetic process"/>
    <property type="evidence" value="ECO:0007669"/>
    <property type="project" value="UniProtKB-KW"/>
</dbReference>
<dbReference type="CDD" id="cd02503">
    <property type="entry name" value="MobA"/>
    <property type="match status" value="1"/>
</dbReference>
<dbReference type="Gene3D" id="3.90.550.10">
    <property type="entry name" value="Spore Coat Polysaccharide Biosynthesis Protein SpsA, Chain A"/>
    <property type="match status" value="1"/>
</dbReference>
<dbReference type="HAMAP" id="MF_00316">
    <property type="entry name" value="MobA"/>
    <property type="match status" value="1"/>
</dbReference>
<dbReference type="InterPro" id="IPR025877">
    <property type="entry name" value="MobA-like_NTP_Trfase"/>
</dbReference>
<dbReference type="InterPro" id="IPR013482">
    <property type="entry name" value="Molybde_CF_guanTrfase"/>
</dbReference>
<dbReference type="InterPro" id="IPR029044">
    <property type="entry name" value="Nucleotide-diphossugar_trans"/>
</dbReference>
<dbReference type="NCBIfam" id="NF001855">
    <property type="entry name" value="PRK00576.1"/>
    <property type="match status" value="1"/>
</dbReference>
<dbReference type="PANTHER" id="PTHR19136">
    <property type="entry name" value="MOLYBDENUM COFACTOR GUANYLYLTRANSFERASE"/>
    <property type="match status" value="1"/>
</dbReference>
<dbReference type="PANTHER" id="PTHR19136:SF81">
    <property type="entry name" value="MOLYBDENUM COFACTOR GUANYLYLTRANSFERASE"/>
    <property type="match status" value="1"/>
</dbReference>
<dbReference type="Pfam" id="PF12804">
    <property type="entry name" value="NTP_transf_3"/>
    <property type="match status" value="1"/>
</dbReference>
<dbReference type="SUPFAM" id="SSF53448">
    <property type="entry name" value="Nucleotide-diphospho-sugar transferases"/>
    <property type="match status" value="1"/>
</dbReference>
<accession>P9WJQ8</accession>
<accession>L0T9V2</accession>
<accession>O53180</accession>
<accession>P65402</accession>
<comment type="function">
    <text evidence="1">Transfers a GMP moiety from GTP to Mo-molybdopterin (Mo-MPT) cofactor (Moco or molybdenum cofactor) to form Mo-molybdopterin guanine dinucleotide (Mo-MGD) cofactor.</text>
</comment>
<comment type="catalytic activity">
    <reaction evidence="1">
        <text>Mo-molybdopterin + GTP + H(+) = Mo-molybdopterin guanine dinucleotide + diphosphate</text>
        <dbReference type="Rhea" id="RHEA:34243"/>
        <dbReference type="ChEBI" id="CHEBI:15378"/>
        <dbReference type="ChEBI" id="CHEBI:33019"/>
        <dbReference type="ChEBI" id="CHEBI:37565"/>
        <dbReference type="ChEBI" id="CHEBI:71302"/>
        <dbReference type="ChEBI" id="CHEBI:71310"/>
        <dbReference type="EC" id="2.7.7.77"/>
    </reaction>
</comment>
<comment type="cofactor">
    <cofactor evidence="1">
        <name>Mg(2+)</name>
        <dbReference type="ChEBI" id="CHEBI:18420"/>
    </cofactor>
</comment>
<comment type="subcellular location">
    <subcellularLocation>
        <location evidence="1">Cytoplasm</location>
    </subcellularLocation>
</comment>
<comment type="domain">
    <text evidence="1">The N-terminal domain determines nucleotide recognition and specific binding, while the C-terminal domain determines the specific binding to the target protein.</text>
</comment>
<comment type="similarity">
    <text evidence="1">Belongs to the MobA family.</text>
</comment>
<keyword id="KW-0963">Cytoplasm</keyword>
<keyword id="KW-0342">GTP-binding</keyword>
<keyword id="KW-0460">Magnesium</keyword>
<keyword id="KW-0479">Metal-binding</keyword>
<keyword id="KW-0501">Molybdenum cofactor biosynthesis</keyword>
<keyword id="KW-0547">Nucleotide-binding</keyword>
<keyword id="KW-1185">Reference proteome</keyword>
<keyword id="KW-0808">Transferase</keyword>
<reference key="1">
    <citation type="journal article" date="2002" name="J. Bacteriol.">
        <title>Whole-genome comparison of Mycobacterium tuberculosis clinical and laboratory strains.</title>
        <authorList>
            <person name="Fleischmann R.D."/>
            <person name="Alland D."/>
            <person name="Eisen J.A."/>
            <person name="Carpenter L."/>
            <person name="White O."/>
            <person name="Peterson J.D."/>
            <person name="DeBoy R.T."/>
            <person name="Dodson R.J."/>
            <person name="Gwinn M.L."/>
            <person name="Haft D.H."/>
            <person name="Hickey E.K."/>
            <person name="Kolonay J.F."/>
            <person name="Nelson W.C."/>
            <person name="Umayam L.A."/>
            <person name="Ermolaeva M.D."/>
            <person name="Salzberg S.L."/>
            <person name="Delcher A."/>
            <person name="Utterback T.R."/>
            <person name="Weidman J.F."/>
            <person name="Khouri H.M."/>
            <person name="Gill J."/>
            <person name="Mikula A."/>
            <person name="Bishai W."/>
            <person name="Jacobs W.R. Jr."/>
            <person name="Venter J.C."/>
            <person name="Fraser C.M."/>
        </authorList>
    </citation>
    <scope>NUCLEOTIDE SEQUENCE [LARGE SCALE GENOMIC DNA]</scope>
    <source>
        <strain>CDC 1551 / Oshkosh</strain>
    </source>
</reference>
<name>MOBA_MYCTO</name>
<protein>
    <recommendedName>
        <fullName evidence="1">Probable molybdenum cofactor guanylyltransferase</fullName>
        <shortName evidence="1">MoCo guanylyltransferase</shortName>
        <ecNumber evidence="1">2.7.7.77</ecNumber>
    </recommendedName>
    <alternativeName>
        <fullName evidence="1">GTP:molybdopterin guanylyltransferase</fullName>
    </alternativeName>
    <alternativeName>
        <fullName evidence="1">Mo-MPT guanylyltransferase</fullName>
    </alternativeName>
    <alternativeName>
        <fullName evidence="1">Molybdopterin guanylyltransferase</fullName>
    </alternativeName>
    <alternativeName>
        <fullName evidence="1">Molybdopterin-guanine dinucleotide synthase</fullName>
        <shortName evidence="1">MGD synthase</shortName>
    </alternativeName>
</protein>
<proteinExistence type="inferred from homology"/>
<evidence type="ECO:0000255" key="1">
    <source>
        <dbReference type="HAMAP-Rule" id="MF_00316"/>
    </source>
</evidence>
<gene>
    <name evidence="1" type="primary">mobA</name>
    <name type="ordered locus">MT2528</name>
</gene>
<organism>
    <name type="scientific">Mycobacterium tuberculosis (strain CDC 1551 / Oshkosh)</name>
    <dbReference type="NCBI Taxonomy" id="83331"/>
    <lineage>
        <taxon>Bacteria</taxon>
        <taxon>Bacillati</taxon>
        <taxon>Actinomycetota</taxon>
        <taxon>Actinomycetes</taxon>
        <taxon>Mycobacteriales</taxon>
        <taxon>Mycobacteriaceae</taxon>
        <taxon>Mycobacterium</taxon>
        <taxon>Mycobacterium tuberculosis complex</taxon>
    </lineage>
</organism>
<feature type="chain" id="PRO_0000427787" description="Probable molybdenum cofactor guanylyltransferase">
    <location>
        <begin position="1"/>
        <end position="201"/>
    </location>
</feature>
<feature type="binding site" evidence="1">
    <location>
        <begin position="16"/>
        <end position="18"/>
    </location>
    <ligand>
        <name>GTP</name>
        <dbReference type="ChEBI" id="CHEBI:37565"/>
    </ligand>
</feature>
<feature type="binding site" evidence="1">
    <location>
        <position position="28"/>
    </location>
    <ligand>
        <name>GTP</name>
        <dbReference type="ChEBI" id="CHEBI:37565"/>
    </ligand>
</feature>
<feature type="binding site" evidence="1">
    <location>
        <position position="75"/>
    </location>
    <ligand>
        <name>GTP</name>
        <dbReference type="ChEBI" id="CHEBI:37565"/>
    </ligand>
</feature>
<feature type="binding site" evidence="1">
    <location>
        <position position="107"/>
    </location>
    <ligand>
        <name>GTP</name>
        <dbReference type="ChEBI" id="CHEBI:37565"/>
    </ligand>
</feature>
<feature type="binding site" evidence="1">
    <location>
        <position position="107"/>
    </location>
    <ligand>
        <name>Mg(2+)</name>
        <dbReference type="ChEBI" id="CHEBI:18420"/>
    </ligand>
</feature>
<sequence length="201" mass="21084">MAELAPDTVPLAGVVLAGGESRRMGRDKATLPLPGGTTTLVEHMVGILGQRCAPVFVMAAPGQPLPTLPVPVLRDELPGLGPLPATGRGLRAAAEAGVRLAFVCAVDMPYLTVELIEDLARRAVQTDAEVVLPWDGRNHYLAAVYRTDLADRVDTLVGAGERKMSALVDASDALRIVMADSRPLTNVNSAAGLHAPMQPGR</sequence>